<proteinExistence type="inferred from homology"/>
<dbReference type="EMBL" id="AE000516">
    <property type="status" value="NOT_ANNOTATED_CDS"/>
    <property type="molecule type" value="Genomic_DNA"/>
</dbReference>
<dbReference type="PIR" id="G70855">
    <property type="entry name" value="G70855"/>
</dbReference>
<dbReference type="PATRIC" id="fig|83331.31.peg.3325"/>
<dbReference type="Proteomes" id="UP000001020">
    <property type="component" value="Chromosome"/>
</dbReference>
<dbReference type="GO" id="GO:0005576">
    <property type="term" value="C:extracellular region"/>
    <property type="evidence" value="ECO:0007669"/>
    <property type="project" value="UniProtKB-SubCell"/>
</dbReference>
<dbReference type="InterPro" id="IPR019692">
    <property type="entry name" value="CFP-6_PH"/>
</dbReference>
<dbReference type="Pfam" id="PF10756">
    <property type="entry name" value="bPH_6"/>
    <property type="match status" value="1"/>
</dbReference>
<accession>P9WIR0</accession>
<accession>L0TBA1</accession>
<accession>O53251</accession>
<accession>P0A5P2</accession>
<sequence length="112" mass="12223">MAHFAVGFLTLGLLVPVLTWPVSAPLLVIPVALSASIIRLRTLADERGVTVRTLVGSRAVRWDDIDGLRFHRGSWARATLKDGTELRLPAVTFATLPHLTEASSGRVPNPYR</sequence>
<gene>
    <name type="primary">cfp6</name>
    <name type="ordered locus">MT3084.1</name>
</gene>
<evidence type="ECO:0000250" key="1"/>
<keyword id="KW-1185">Reference proteome</keyword>
<keyword id="KW-0964">Secreted</keyword>
<reference key="1">
    <citation type="journal article" date="2002" name="J. Bacteriol.">
        <title>Whole-genome comparison of Mycobacterium tuberculosis clinical and laboratory strains.</title>
        <authorList>
            <person name="Fleischmann R.D."/>
            <person name="Alland D."/>
            <person name="Eisen J.A."/>
            <person name="Carpenter L."/>
            <person name="White O."/>
            <person name="Peterson J.D."/>
            <person name="DeBoy R.T."/>
            <person name="Dodson R.J."/>
            <person name="Gwinn M.L."/>
            <person name="Haft D.H."/>
            <person name="Hickey E.K."/>
            <person name="Kolonay J.F."/>
            <person name="Nelson W.C."/>
            <person name="Umayam L.A."/>
            <person name="Ermolaeva M.D."/>
            <person name="Salzberg S.L."/>
            <person name="Delcher A."/>
            <person name="Utterback T.R."/>
            <person name="Weidman J.F."/>
            <person name="Khouri H.M."/>
            <person name="Gill J."/>
            <person name="Mikula A."/>
            <person name="Bishai W."/>
            <person name="Jacobs W.R. Jr."/>
            <person name="Venter J.C."/>
            <person name="Fraser C.M."/>
        </authorList>
    </citation>
    <scope>NUCLEOTIDE SEQUENCE [LARGE SCALE GENOMIC DNA]</scope>
    <source>
        <strain>CDC 1551 / Oshkosh</strain>
    </source>
</reference>
<organism>
    <name type="scientific">Mycobacterium tuberculosis (strain CDC 1551 / Oshkosh)</name>
    <dbReference type="NCBI Taxonomy" id="83331"/>
    <lineage>
        <taxon>Bacteria</taxon>
        <taxon>Bacillati</taxon>
        <taxon>Actinomycetota</taxon>
        <taxon>Actinomycetes</taxon>
        <taxon>Mycobacteriales</taxon>
        <taxon>Mycobacteriaceae</taxon>
        <taxon>Mycobacterium</taxon>
        <taxon>Mycobacterium tuberculosis complex</taxon>
    </lineage>
</organism>
<comment type="subcellular location">
    <subcellularLocation>
        <location evidence="1">Secreted</location>
    </subcellularLocation>
</comment>
<name>CFP6_MYCTO</name>
<protein>
    <recommendedName>
        <fullName>Low molecular weight protein antigen 6</fullName>
    </recommendedName>
    <alternativeName>
        <fullName>CFP-6</fullName>
    </alternativeName>
</protein>
<feature type="chain" id="PRO_0000427961" description="Low molecular weight protein antigen 6">
    <location>
        <begin position="1"/>
        <end position="112"/>
    </location>
</feature>